<dbReference type="EMBL" id="AC006033">
    <property type="status" value="NOT_ANNOTATED_CDS"/>
    <property type="molecule type" value="Genomic_DNA"/>
</dbReference>
<dbReference type="IMGT_GENE-DB" id="TRGJ1"/>
<dbReference type="BioMuta" id="TRGJ1"/>
<dbReference type="Ensembl" id="ENST00000390337.1">
    <property type="protein sequence ID" value="ENSP00000420798.1"/>
    <property type="gene ID" value="ENSG00000211690.1"/>
</dbReference>
<dbReference type="UCSC" id="uc064cxl.1">
    <property type="organism name" value="human"/>
</dbReference>
<dbReference type="AGR" id="HGNC:12277"/>
<dbReference type="GeneCards" id="TRGJ1"/>
<dbReference type="HGNC" id="HGNC:12277">
    <property type="gene designation" value="TRGJ1"/>
</dbReference>
<dbReference type="HPA" id="ENSG00000211690">
    <property type="expression patterns" value="Group enriched (bone marrow, lymphoid tissue, prostate)"/>
</dbReference>
<dbReference type="neXtProt" id="NX_A0A075B6S0"/>
<dbReference type="VEuPathDB" id="HostDB:ENSG00000211690"/>
<dbReference type="HOGENOM" id="CLU_221942_6_2_1"/>
<dbReference type="InParanoid" id="A0A075B6S0"/>
<dbReference type="PAN-GO" id="A0A075B6S0">
    <property type="GO annotations" value="0 GO annotations based on evolutionary models"/>
</dbReference>
<dbReference type="SignaLink" id="A0A075B6S0"/>
<dbReference type="PRO" id="PR:A0A075B6S0"/>
<dbReference type="Proteomes" id="UP000005640">
    <property type="component" value="Chromosome 7"/>
</dbReference>
<dbReference type="Bgee" id="ENSG00000211690">
    <property type="expression patterns" value="Expressed in granulocyte and 84 other cell types or tissues"/>
</dbReference>
<dbReference type="GO" id="GO:0042101">
    <property type="term" value="C:T cell receptor complex"/>
    <property type="evidence" value="ECO:0007669"/>
    <property type="project" value="UniProtKB-KW"/>
</dbReference>
<dbReference type="GO" id="GO:0002250">
    <property type="term" value="P:adaptive immune response"/>
    <property type="evidence" value="ECO:0007669"/>
    <property type="project" value="UniProtKB-KW"/>
</dbReference>
<accession>A0A075B6S0</accession>
<organism>
    <name type="scientific">Homo sapiens</name>
    <name type="common">Human</name>
    <dbReference type="NCBI Taxonomy" id="9606"/>
    <lineage>
        <taxon>Eukaryota</taxon>
        <taxon>Metazoa</taxon>
        <taxon>Chordata</taxon>
        <taxon>Craniata</taxon>
        <taxon>Vertebrata</taxon>
        <taxon>Euteleostomi</taxon>
        <taxon>Mammalia</taxon>
        <taxon>Eutheria</taxon>
        <taxon>Euarchontoglires</taxon>
        <taxon>Primates</taxon>
        <taxon>Haplorrhini</taxon>
        <taxon>Catarrhini</taxon>
        <taxon>Hominidae</taxon>
        <taxon>Homo</taxon>
    </lineage>
</organism>
<protein>
    <recommendedName>
        <fullName evidence="6">T cell receptor gamma joining 1</fullName>
    </recommendedName>
</protein>
<feature type="chain" id="PRO_0000446089" description="T cell receptor gamma joining 1">
    <location>
        <begin position="1" status="less than"/>
        <end position="16" status="greater than"/>
    </location>
</feature>
<feature type="non-terminal residue">
    <location>
        <position position="1"/>
    </location>
</feature>
<feature type="non-terminal residue">
    <location>
        <position position="16"/>
    </location>
</feature>
<reference key="1">
    <citation type="journal article" date="2003" name="Nature">
        <title>The DNA sequence of human chromosome 7.</title>
        <authorList>
            <person name="Hillier L.W."/>
            <person name="Fulton R.S."/>
            <person name="Fulton L.A."/>
            <person name="Graves T.A."/>
            <person name="Pepin K.H."/>
            <person name="Wagner-McPherson C."/>
            <person name="Layman D."/>
            <person name="Maas J."/>
            <person name="Jaeger S."/>
            <person name="Walker R."/>
            <person name="Wylie K."/>
            <person name="Sekhon M."/>
            <person name="Becker M.C."/>
            <person name="O'Laughlin M.D."/>
            <person name="Schaller M.E."/>
            <person name="Fewell G.A."/>
            <person name="Delehaunty K.D."/>
            <person name="Miner T.L."/>
            <person name="Nash W.E."/>
            <person name="Cordes M."/>
            <person name="Du H."/>
            <person name="Sun H."/>
            <person name="Edwards J."/>
            <person name="Bradshaw-Cordum H."/>
            <person name="Ali J."/>
            <person name="Andrews S."/>
            <person name="Isak A."/>
            <person name="Vanbrunt A."/>
            <person name="Nguyen C."/>
            <person name="Du F."/>
            <person name="Lamar B."/>
            <person name="Courtney L."/>
            <person name="Kalicki J."/>
            <person name="Ozersky P."/>
            <person name="Bielicki L."/>
            <person name="Scott K."/>
            <person name="Holmes A."/>
            <person name="Harkins R."/>
            <person name="Harris A."/>
            <person name="Strong C.M."/>
            <person name="Hou S."/>
            <person name="Tomlinson C."/>
            <person name="Dauphin-Kohlberg S."/>
            <person name="Kozlowicz-Reilly A."/>
            <person name="Leonard S."/>
            <person name="Rohlfing T."/>
            <person name="Rock S.M."/>
            <person name="Tin-Wollam A.-M."/>
            <person name="Abbott A."/>
            <person name="Minx P."/>
            <person name="Maupin R."/>
            <person name="Strowmatt C."/>
            <person name="Latreille P."/>
            <person name="Miller N."/>
            <person name="Johnson D."/>
            <person name="Murray J."/>
            <person name="Woessner J.P."/>
            <person name="Wendl M.C."/>
            <person name="Yang S.-P."/>
            <person name="Schultz B.R."/>
            <person name="Wallis J.W."/>
            <person name="Spieth J."/>
            <person name="Bieri T.A."/>
            <person name="Nelson J.O."/>
            <person name="Berkowicz N."/>
            <person name="Wohldmann P.E."/>
            <person name="Cook L.L."/>
            <person name="Hickenbotham M.T."/>
            <person name="Eldred J."/>
            <person name="Williams D."/>
            <person name="Bedell J.A."/>
            <person name="Mardis E.R."/>
            <person name="Clifton S.W."/>
            <person name="Chissoe S.L."/>
            <person name="Marra M.A."/>
            <person name="Raymond C."/>
            <person name="Haugen E."/>
            <person name="Gillett W."/>
            <person name="Zhou Y."/>
            <person name="James R."/>
            <person name="Phelps K."/>
            <person name="Iadanoto S."/>
            <person name="Bubb K."/>
            <person name="Simms E."/>
            <person name="Levy R."/>
            <person name="Clendenning J."/>
            <person name="Kaul R."/>
            <person name="Kent W.J."/>
            <person name="Furey T.S."/>
            <person name="Baertsch R.A."/>
            <person name="Brent M.R."/>
            <person name="Keibler E."/>
            <person name="Flicek P."/>
            <person name="Bork P."/>
            <person name="Suyama M."/>
            <person name="Bailey J.A."/>
            <person name="Portnoy M.E."/>
            <person name="Torrents D."/>
            <person name="Chinwalla A.T."/>
            <person name="Gish W.R."/>
            <person name="Eddy S.R."/>
            <person name="McPherson J.D."/>
            <person name="Olson M.V."/>
            <person name="Eichler E.E."/>
            <person name="Green E.D."/>
            <person name="Waterston R.H."/>
            <person name="Wilson R.K."/>
        </authorList>
    </citation>
    <scope>NUCLEOTIDE SEQUENCE [LARGE SCALE GENOMIC DNA] (IMGT ALLELE TRGJ1*02)</scope>
</reference>
<reference key="2">
    <citation type="book" date="2001" name="The T Cell Receptor FactsBook.">
        <title>The T Cell Receptor FactsBook.</title>
        <editorList>
            <person name="Lefranc M.P."/>
            <person name="Lefranc G."/>
        </editorList>
        <authorList>
            <person name="Lefranc M.P."/>
            <person name="Lefranc G."/>
        </authorList>
    </citation>
    <scope>NOMENCLATURE</scope>
</reference>
<reference key="3">
    <citation type="journal article" date="2013" name="Nat. Rev. Immunol.">
        <title>Six-of-the-best: unique contributions of gammadelta T cells to immunology.</title>
        <authorList>
            <person name="Vantourout P."/>
            <person name="Hayday A."/>
        </authorList>
    </citation>
    <scope>REVIEW ON FUNCTION AND ANTIGEN RECOGNITION</scope>
</reference>
<reference key="4">
    <citation type="journal article" date="2014" name="Annu. Rev. Immunol.">
        <title>gammadelta T cells: first line of defense and beyond.</title>
        <authorList>
            <person name="Chien Y.H."/>
            <person name="Meyer C."/>
            <person name="Bonneville M."/>
        </authorList>
    </citation>
    <scope>REVIEW ON GAMMA DELTA T CELL RECEPTOR DIVERSITY</scope>
</reference>
<reference key="5">
    <citation type="journal article" date="2014" name="Front. Immunol.">
        <title>Immunoglobulin and T Cell Receptor Genes: IMGT((R)) and the Birth and Rise of Immunoinformatics.</title>
        <authorList>
            <person name="Lefranc M.P."/>
        </authorList>
    </citation>
    <scope>NOMENCLATURE</scope>
</reference>
<reference key="6">
    <citation type="journal article" date="2015" name="Front. Immunol.">
        <title>Five Layers of Receptor Signaling in gammadelta T-Cell Differentiation and Activation.</title>
        <authorList>
            <person name="Ribeiro S.T."/>
            <person name="Ribot J.C."/>
            <person name="Silva-Santos B."/>
        </authorList>
    </citation>
    <scope>REVIEW ON T CELL RECEPTOR SIGNALING</scope>
    <scope>SUBUNIT</scope>
</reference>
<reference key="7">
    <citation type="journal article" date="2017" name="Nat. Rev. Immunol.">
        <title>gammadelta T cells in homeostasis and host defence of epithelial barrier tissues.</title>
        <authorList>
            <person name="Nielsen M.M."/>
            <person name="Witherden D.A."/>
            <person name="Havran W.L."/>
        </authorList>
    </citation>
    <scope>REVIEW ON FUNCTION</scope>
</reference>
<evidence type="ECO:0000303" key="1">
    <source>
    </source>
</evidence>
<evidence type="ECO:0000303" key="2">
    <source>
    </source>
</evidence>
<evidence type="ECO:0000303" key="3">
    <source>
    </source>
</evidence>
<evidence type="ECO:0000303" key="4">
    <source>
    </source>
</evidence>
<evidence type="ECO:0000303" key="5">
    <source>
    </source>
</evidence>
<evidence type="ECO:0000303" key="6">
    <source ref="2"/>
</evidence>
<evidence type="ECO:0000305" key="7"/>
<evidence type="ECO:0000312" key="8">
    <source>
        <dbReference type="HGNC" id="HGNC:12277"/>
    </source>
</evidence>
<sequence length="16" mass="1791">NYYKKLFGSGTTLVVT</sequence>
<keyword id="KW-1064">Adaptive immunity</keyword>
<keyword id="KW-1003">Cell membrane</keyword>
<keyword id="KW-0391">Immunity</keyword>
<keyword id="KW-0472">Membrane</keyword>
<keyword id="KW-0675">Receptor</keyword>
<keyword id="KW-1185">Reference proteome</keyword>
<keyword id="KW-1279">T cell receptor</keyword>
<proteinExistence type="evidence at protein level"/>
<comment type="function">
    <text evidence="1 2 3 4 5">J region of the variable domain of T cell receptor (TR) gamma chain that participates in the antigen recognition (PubMed:24600447). Gamma-delta TRs recognize a variety of self and foreign non-peptide antigens frequently expressed at the epithelial boundaries between the host and external environment, including endogenous lipids presented by MH-like protein CD1D and phosphoantigens presented by butyrophilin-like molecule BTN3A1. Upon antigen recognition induces rapid, innate-like immune responses involved in pathogen clearance and tissue repair (PubMed:23348415, PubMed:28920588). Binding of gamma-delta TR complex to antigen triggers phosphorylation of immunoreceptor tyrosine-based activation motifs (ITAMs) in the CD3 chains by the LCK and FYN kinases, allowing the recruitment, phosphorylation, and activation of ZAP70 that facilitates phosphorylation of the scaffolding proteins LCP2 and LAT. This lead to the formation of a supramolecular signalosome that recruits the phospholipase PLCG1, resulting in calcium mobilization and ERK activation, ultimately leading to T cell expansion and differentiation into effector cells (PubMed:25674089). Gamma-delta TRs are produced through somatic rearrangement of a limited repertoire of variable (V), diversity (D), and joining (J) genes. The potential diversity of gamma-delta TRs is conferred by the unique ability to rearrange (D) genes in tandem and to utilize all three reading frames. The combinatorial diversity is considerably increased by the sequence exonuclease trimming and random nucleotide (N) region additions which occur during the V-(D)-J rearrangements (PubMed:24387714).</text>
</comment>
<comment type="subunit">
    <text evidence="4">Gamma-delta TR is a heterodimer composed of a gamma and delta chain; disulfide-linked. The gamma-delta TR is associated with the transmembrane signaling CD3 coreceptor proteins following the stoichiometry: a single gamma-delta TR heterodimer associates with one CD3D-CD3E heterodimer, one CD3G-CD3E heterodimer and one CD247 homodimer forming a stable octameric structure. Upon activation, gamma-delta TR complex associates with FCER1G to initiate intracellular signaling.</text>
</comment>
<comment type="subcellular location">
    <subcellularLocation>
        <location evidence="7">Cell membrane</location>
    </subcellularLocation>
</comment>
<comment type="polymorphism">
    <text evidence="7">There are several alleles. The sequence shown is that of IMGT allele TRGJ1*02.</text>
</comment>
<comment type="caution">
    <text evidence="7">There are several genes encoding the J region in the T cell receptor gamma locus. The peptide described in this entry is a representative for all the peptides encoded by these genes.</text>
</comment>
<gene>
    <name evidence="6" type="primary">TRGJ1</name>
    <name evidence="8" type="synonym">TCRGJ1</name>
</gene>
<name>TRGJ1_HUMAN</name>